<comment type="function">
    <text evidence="1">Produces ATP from ADP in the presence of a proton gradient across the membrane. The gamma chain is believed to be important in regulating ATPase activity and the flow of protons through the CF(0) complex.</text>
</comment>
<comment type="subunit">
    <text evidence="1">F-type ATPases have 2 components, CF(1) - the catalytic core - and CF(0) - the membrane proton channel. CF(1) has five subunits: alpha(3), beta(3), gamma(1), delta(1), epsilon(1). CF(0) has three main subunits: a, b and c.</text>
</comment>
<comment type="subcellular location">
    <subcellularLocation>
        <location evidence="1">Cell inner membrane</location>
        <topology evidence="1">Peripheral membrane protein</topology>
    </subcellularLocation>
</comment>
<comment type="similarity">
    <text evidence="1">Belongs to the ATPase gamma chain family.</text>
</comment>
<organism>
    <name type="scientific">Dictyoglomus thermophilum (strain ATCC 35947 / DSM 3960 / H-6-12)</name>
    <dbReference type="NCBI Taxonomy" id="309799"/>
    <lineage>
        <taxon>Bacteria</taxon>
        <taxon>Pseudomonadati</taxon>
        <taxon>Dictyoglomota</taxon>
        <taxon>Dictyoglomia</taxon>
        <taxon>Dictyoglomales</taxon>
        <taxon>Dictyoglomaceae</taxon>
        <taxon>Dictyoglomus</taxon>
    </lineage>
</organism>
<proteinExistence type="inferred from homology"/>
<accession>B5YBP9</accession>
<protein>
    <recommendedName>
        <fullName evidence="1">ATP synthase gamma chain</fullName>
    </recommendedName>
    <alternativeName>
        <fullName evidence="1">ATP synthase F1 sector gamma subunit</fullName>
    </alternativeName>
    <alternativeName>
        <fullName evidence="1">F-ATPase gamma subunit</fullName>
    </alternativeName>
</protein>
<gene>
    <name evidence="1" type="primary">atpG</name>
    <name type="ordered locus">DICTH_1859</name>
</gene>
<sequence length="290" mass="34181">MPTLQTLRRKVKTIQNITHIVHSMETLSMVKIRALQDRSLRLKPYTEELNNILMELVKRLSNEYLNHPLVKERVVYKTGVLVFTSDLGFCGSYNLQIIETLKKFIGNKKSQNLVFYSVGSYAQRYLSSNNFNIRKKYIKFLEDTSFSNAKLLARDLLDDFLNYYIDELFVIYFDFINIAKQEVRIKKLLPLIPISLEEKKEEFFLFLPSLSEILDPLLMDIFETQIHQIMLDSAASEQAFRRFAMKRAHENAQKIYSKLLFQLNQLRQNQITRELLDITSSIEAMKEEVK</sequence>
<feature type="chain" id="PRO_1000134140" description="ATP synthase gamma chain">
    <location>
        <begin position="1"/>
        <end position="290"/>
    </location>
</feature>
<reference key="1">
    <citation type="journal article" date="2014" name="Genome Announc.">
        <title>Complete Genome Sequence of the Extreme Thermophile Dictyoglomus thermophilum H-6-12.</title>
        <authorList>
            <person name="Coil D.A."/>
            <person name="Badger J.H."/>
            <person name="Forberger H.C."/>
            <person name="Riggs F."/>
            <person name="Madupu R."/>
            <person name="Fedorova N."/>
            <person name="Ward N."/>
            <person name="Robb F.T."/>
            <person name="Eisen J.A."/>
        </authorList>
    </citation>
    <scope>NUCLEOTIDE SEQUENCE [LARGE SCALE GENOMIC DNA]</scope>
    <source>
        <strain>ATCC 35947 / DSM 3960 / H-6-12</strain>
    </source>
</reference>
<evidence type="ECO:0000255" key="1">
    <source>
        <dbReference type="HAMAP-Rule" id="MF_00815"/>
    </source>
</evidence>
<keyword id="KW-0066">ATP synthesis</keyword>
<keyword id="KW-0997">Cell inner membrane</keyword>
<keyword id="KW-1003">Cell membrane</keyword>
<keyword id="KW-0139">CF(1)</keyword>
<keyword id="KW-0375">Hydrogen ion transport</keyword>
<keyword id="KW-0406">Ion transport</keyword>
<keyword id="KW-0472">Membrane</keyword>
<keyword id="KW-0813">Transport</keyword>
<dbReference type="EMBL" id="CP001146">
    <property type="protein sequence ID" value="ACI20009.1"/>
    <property type="molecule type" value="Genomic_DNA"/>
</dbReference>
<dbReference type="RefSeq" id="WP_012548641.1">
    <property type="nucleotide sequence ID" value="NC_011297.1"/>
</dbReference>
<dbReference type="SMR" id="B5YBP9"/>
<dbReference type="STRING" id="309799.DICTH_1859"/>
<dbReference type="PaxDb" id="309799-DICTH_1859"/>
<dbReference type="KEGG" id="dth:DICTH_1859"/>
<dbReference type="eggNOG" id="COG0224">
    <property type="taxonomic scope" value="Bacteria"/>
</dbReference>
<dbReference type="HOGENOM" id="CLU_050669_0_1_0"/>
<dbReference type="OrthoDB" id="9812769at2"/>
<dbReference type="Proteomes" id="UP000001733">
    <property type="component" value="Chromosome"/>
</dbReference>
<dbReference type="GO" id="GO:0005886">
    <property type="term" value="C:plasma membrane"/>
    <property type="evidence" value="ECO:0007669"/>
    <property type="project" value="UniProtKB-SubCell"/>
</dbReference>
<dbReference type="GO" id="GO:0045259">
    <property type="term" value="C:proton-transporting ATP synthase complex"/>
    <property type="evidence" value="ECO:0007669"/>
    <property type="project" value="UniProtKB-KW"/>
</dbReference>
<dbReference type="GO" id="GO:0005524">
    <property type="term" value="F:ATP binding"/>
    <property type="evidence" value="ECO:0007669"/>
    <property type="project" value="UniProtKB-UniRule"/>
</dbReference>
<dbReference type="GO" id="GO:0046933">
    <property type="term" value="F:proton-transporting ATP synthase activity, rotational mechanism"/>
    <property type="evidence" value="ECO:0007669"/>
    <property type="project" value="UniProtKB-UniRule"/>
</dbReference>
<dbReference type="GO" id="GO:0042777">
    <property type="term" value="P:proton motive force-driven plasma membrane ATP synthesis"/>
    <property type="evidence" value="ECO:0007669"/>
    <property type="project" value="UniProtKB-UniRule"/>
</dbReference>
<dbReference type="CDD" id="cd12151">
    <property type="entry name" value="F1-ATPase_gamma"/>
    <property type="match status" value="1"/>
</dbReference>
<dbReference type="Gene3D" id="3.40.1380.10">
    <property type="match status" value="1"/>
</dbReference>
<dbReference type="Gene3D" id="1.10.287.80">
    <property type="entry name" value="ATP synthase, gamma subunit, helix hairpin domain"/>
    <property type="match status" value="1"/>
</dbReference>
<dbReference type="HAMAP" id="MF_00815">
    <property type="entry name" value="ATP_synth_gamma_bact"/>
    <property type="match status" value="1"/>
</dbReference>
<dbReference type="InterPro" id="IPR035968">
    <property type="entry name" value="ATP_synth_F1_ATPase_gsu"/>
</dbReference>
<dbReference type="InterPro" id="IPR000131">
    <property type="entry name" value="ATP_synth_F1_gsu"/>
</dbReference>
<dbReference type="NCBIfam" id="TIGR01146">
    <property type="entry name" value="ATPsyn_F1gamma"/>
    <property type="match status" value="1"/>
</dbReference>
<dbReference type="PANTHER" id="PTHR11693">
    <property type="entry name" value="ATP SYNTHASE GAMMA CHAIN"/>
    <property type="match status" value="1"/>
</dbReference>
<dbReference type="PANTHER" id="PTHR11693:SF22">
    <property type="entry name" value="ATP SYNTHASE SUBUNIT GAMMA, MITOCHONDRIAL"/>
    <property type="match status" value="1"/>
</dbReference>
<dbReference type="Pfam" id="PF00231">
    <property type="entry name" value="ATP-synt"/>
    <property type="match status" value="1"/>
</dbReference>
<dbReference type="PRINTS" id="PR00126">
    <property type="entry name" value="ATPASEGAMMA"/>
</dbReference>
<dbReference type="SUPFAM" id="SSF52943">
    <property type="entry name" value="ATP synthase (F1-ATPase), gamma subunit"/>
    <property type="match status" value="1"/>
</dbReference>
<name>ATPG_DICT6</name>